<protein>
    <recommendedName>
        <fullName evidence="1">S-adenosylmethionine synthase</fullName>
        <shortName evidence="1">AdoMet synthase</shortName>
        <ecNumber evidence="1">2.5.1.6</ecNumber>
    </recommendedName>
    <alternativeName>
        <fullName evidence="1">MAT</fullName>
    </alternativeName>
    <alternativeName>
        <fullName evidence="1">Methionine adenosyltransferase</fullName>
    </alternativeName>
</protein>
<name>METK_TERTT</name>
<proteinExistence type="inferred from homology"/>
<gene>
    <name evidence="1" type="primary">metK</name>
    <name type="ordered locus">TERTU_3976</name>
</gene>
<keyword id="KW-0067">ATP-binding</keyword>
<keyword id="KW-0963">Cytoplasm</keyword>
<keyword id="KW-0460">Magnesium</keyword>
<keyword id="KW-0479">Metal-binding</keyword>
<keyword id="KW-0547">Nucleotide-binding</keyword>
<keyword id="KW-0554">One-carbon metabolism</keyword>
<keyword id="KW-0630">Potassium</keyword>
<keyword id="KW-1185">Reference proteome</keyword>
<keyword id="KW-0808">Transferase</keyword>
<feature type="chain" id="PRO_1000202628" description="S-adenosylmethionine synthase">
    <location>
        <begin position="1"/>
        <end position="384"/>
    </location>
</feature>
<feature type="region of interest" description="Flexible loop" evidence="1">
    <location>
        <begin position="100"/>
        <end position="110"/>
    </location>
</feature>
<feature type="binding site" description="in other chain" evidence="1">
    <location>
        <position position="16"/>
    </location>
    <ligand>
        <name>ATP</name>
        <dbReference type="ChEBI" id="CHEBI:30616"/>
        <note>ligand shared between two neighboring subunits</note>
    </ligand>
</feature>
<feature type="binding site" evidence="1">
    <location>
        <position position="18"/>
    </location>
    <ligand>
        <name>Mg(2+)</name>
        <dbReference type="ChEBI" id="CHEBI:18420"/>
    </ligand>
</feature>
<feature type="binding site" evidence="1">
    <location>
        <position position="44"/>
    </location>
    <ligand>
        <name>K(+)</name>
        <dbReference type="ChEBI" id="CHEBI:29103"/>
    </ligand>
</feature>
<feature type="binding site" description="in other chain" evidence="1">
    <location>
        <position position="57"/>
    </location>
    <ligand>
        <name>L-methionine</name>
        <dbReference type="ChEBI" id="CHEBI:57844"/>
        <note>ligand shared between two neighboring subunits</note>
    </ligand>
</feature>
<feature type="binding site" description="in other chain" evidence="1">
    <location>
        <position position="100"/>
    </location>
    <ligand>
        <name>L-methionine</name>
        <dbReference type="ChEBI" id="CHEBI:57844"/>
        <note>ligand shared between two neighboring subunits</note>
    </ligand>
</feature>
<feature type="binding site" description="in other chain" evidence="1">
    <location>
        <begin position="165"/>
        <end position="167"/>
    </location>
    <ligand>
        <name>ATP</name>
        <dbReference type="ChEBI" id="CHEBI:30616"/>
        <note>ligand shared between two neighboring subunits</note>
    </ligand>
</feature>
<feature type="binding site" evidence="1">
    <location>
        <position position="240"/>
    </location>
    <ligand>
        <name>ATP</name>
        <dbReference type="ChEBI" id="CHEBI:30616"/>
        <note>ligand shared between two neighboring subunits</note>
    </ligand>
</feature>
<feature type="binding site" evidence="1">
    <location>
        <position position="240"/>
    </location>
    <ligand>
        <name>L-methionine</name>
        <dbReference type="ChEBI" id="CHEBI:57844"/>
        <note>ligand shared between two neighboring subunits</note>
    </ligand>
</feature>
<feature type="binding site" description="in other chain" evidence="1">
    <location>
        <begin position="246"/>
        <end position="247"/>
    </location>
    <ligand>
        <name>ATP</name>
        <dbReference type="ChEBI" id="CHEBI:30616"/>
        <note>ligand shared between two neighboring subunits</note>
    </ligand>
</feature>
<feature type="binding site" evidence="1">
    <location>
        <position position="263"/>
    </location>
    <ligand>
        <name>ATP</name>
        <dbReference type="ChEBI" id="CHEBI:30616"/>
        <note>ligand shared between two neighboring subunits</note>
    </ligand>
</feature>
<feature type="binding site" evidence="1">
    <location>
        <position position="267"/>
    </location>
    <ligand>
        <name>ATP</name>
        <dbReference type="ChEBI" id="CHEBI:30616"/>
        <note>ligand shared between two neighboring subunits</note>
    </ligand>
</feature>
<feature type="binding site" description="in other chain" evidence="1">
    <location>
        <position position="271"/>
    </location>
    <ligand>
        <name>L-methionine</name>
        <dbReference type="ChEBI" id="CHEBI:57844"/>
        <note>ligand shared between two neighboring subunits</note>
    </ligand>
</feature>
<reference key="1">
    <citation type="journal article" date="2009" name="PLoS ONE">
        <title>The complete genome of Teredinibacter turnerae T7901: an intracellular endosymbiont of marine wood-boring bivalves (shipworms).</title>
        <authorList>
            <person name="Yang J.C."/>
            <person name="Madupu R."/>
            <person name="Durkin A.S."/>
            <person name="Ekborg N.A."/>
            <person name="Pedamallu C.S."/>
            <person name="Hostetler J.B."/>
            <person name="Radune D."/>
            <person name="Toms B.S."/>
            <person name="Henrissat B."/>
            <person name="Coutinho P.M."/>
            <person name="Schwarz S."/>
            <person name="Field L."/>
            <person name="Trindade-Silva A.E."/>
            <person name="Soares C.A.G."/>
            <person name="Elshahawi S."/>
            <person name="Hanora A."/>
            <person name="Schmidt E.W."/>
            <person name="Haygood M.G."/>
            <person name="Posfai J."/>
            <person name="Benner J."/>
            <person name="Madinger C."/>
            <person name="Nove J."/>
            <person name="Anton B."/>
            <person name="Chaudhary K."/>
            <person name="Foster J."/>
            <person name="Holman A."/>
            <person name="Kumar S."/>
            <person name="Lessard P.A."/>
            <person name="Luyten Y.A."/>
            <person name="Slatko B."/>
            <person name="Wood N."/>
            <person name="Wu B."/>
            <person name="Teplitski M."/>
            <person name="Mougous J.D."/>
            <person name="Ward N."/>
            <person name="Eisen J.A."/>
            <person name="Badger J.H."/>
            <person name="Distel D.L."/>
        </authorList>
    </citation>
    <scope>NUCLEOTIDE SEQUENCE [LARGE SCALE GENOMIC DNA]</scope>
    <source>
        <strain>ATCC 39867 / T7901</strain>
    </source>
</reference>
<sequence>MSEYSIFTSESVSEGHPDKMADQISDAVLDAILKDDKHARVAVETLVKTGMAIVAGEVRTSTYVDLEDLIRQVILDIGYNSSDVGFDGASCAVINAIGKQSADIAMGVDEAENKDMGAGDQGLMFGYATNETDVLMPAPIYYSHRLVEKQAELRKSGAHAWSRPDAKSQVTLRYENGKPVAVDAVVLSTQHAPGVSQAQIHEAVMEEIIKPVLPAEWLHSNTKYHINPTGQFIIGGPVGDCGLTGRKIIVDTYGGMARHGGGAFSGKDPSKVDRSAAYAGRYVAKNIVAAGLADRCEIQVSYAIGVAEPTSISVNTFGTGKIDDGKIVELVKEHFDLRPRGLIEMLDLMRPIYRKTAAYGHFGRELPEFTWEITDKADVLKAAL</sequence>
<evidence type="ECO:0000255" key="1">
    <source>
        <dbReference type="HAMAP-Rule" id="MF_00086"/>
    </source>
</evidence>
<comment type="function">
    <text evidence="1">Catalyzes the formation of S-adenosylmethionine (AdoMet) from methionine and ATP. The overall synthetic reaction is composed of two sequential steps, AdoMet formation and the subsequent tripolyphosphate hydrolysis which occurs prior to release of AdoMet from the enzyme.</text>
</comment>
<comment type="catalytic activity">
    <reaction evidence="1">
        <text>L-methionine + ATP + H2O = S-adenosyl-L-methionine + phosphate + diphosphate</text>
        <dbReference type="Rhea" id="RHEA:21080"/>
        <dbReference type="ChEBI" id="CHEBI:15377"/>
        <dbReference type="ChEBI" id="CHEBI:30616"/>
        <dbReference type="ChEBI" id="CHEBI:33019"/>
        <dbReference type="ChEBI" id="CHEBI:43474"/>
        <dbReference type="ChEBI" id="CHEBI:57844"/>
        <dbReference type="ChEBI" id="CHEBI:59789"/>
        <dbReference type="EC" id="2.5.1.6"/>
    </reaction>
</comment>
<comment type="cofactor">
    <cofactor evidence="1">
        <name>Mg(2+)</name>
        <dbReference type="ChEBI" id="CHEBI:18420"/>
    </cofactor>
    <text evidence="1">Binds 2 divalent ions per subunit.</text>
</comment>
<comment type="cofactor">
    <cofactor evidence="1">
        <name>K(+)</name>
        <dbReference type="ChEBI" id="CHEBI:29103"/>
    </cofactor>
    <text evidence="1">Binds 1 potassium ion per subunit.</text>
</comment>
<comment type="pathway">
    <text evidence="1">Amino-acid biosynthesis; S-adenosyl-L-methionine biosynthesis; S-adenosyl-L-methionine from L-methionine: step 1/1.</text>
</comment>
<comment type="subunit">
    <text evidence="1">Homotetramer; dimer of dimers.</text>
</comment>
<comment type="subcellular location">
    <subcellularLocation>
        <location evidence="1">Cytoplasm</location>
    </subcellularLocation>
</comment>
<comment type="similarity">
    <text evidence="1">Belongs to the AdoMet synthase family.</text>
</comment>
<dbReference type="EC" id="2.5.1.6" evidence="1"/>
<dbReference type="EMBL" id="CP001614">
    <property type="protein sequence ID" value="ACR13102.1"/>
    <property type="molecule type" value="Genomic_DNA"/>
</dbReference>
<dbReference type="RefSeq" id="WP_015819215.1">
    <property type="nucleotide sequence ID" value="NC_012997.1"/>
</dbReference>
<dbReference type="SMR" id="C5BTQ4"/>
<dbReference type="STRING" id="377629.TERTU_3976"/>
<dbReference type="KEGG" id="ttu:TERTU_3976"/>
<dbReference type="eggNOG" id="COG0192">
    <property type="taxonomic scope" value="Bacteria"/>
</dbReference>
<dbReference type="HOGENOM" id="CLU_041802_1_1_6"/>
<dbReference type="OrthoDB" id="9801686at2"/>
<dbReference type="UniPathway" id="UPA00315">
    <property type="reaction ID" value="UER00080"/>
</dbReference>
<dbReference type="Proteomes" id="UP000009080">
    <property type="component" value="Chromosome"/>
</dbReference>
<dbReference type="GO" id="GO:0005737">
    <property type="term" value="C:cytoplasm"/>
    <property type="evidence" value="ECO:0007669"/>
    <property type="project" value="UniProtKB-SubCell"/>
</dbReference>
<dbReference type="GO" id="GO:0005524">
    <property type="term" value="F:ATP binding"/>
    <property type="evidence" value="ECO:0007669"/>
    <property type="project" value="UniProtKB-UniRule"/>
</dbReference>
<dbReference type="GO" id="GO:0000287">
    <property type="term" value="F:magnesium ion binding"/>
    <property type="evidence" value="ECO:0007669"/>
    <property type="project" value="UniProtKB-UniRule"/>
</dbReference>
<dbReference type="GO" id="GO:0004478">
    <property type="term" value="F:methionine adenosyltransferase activity"/>
    <property type="evidence" value="ECO:0007669"/>
    <property type="project" value="UniProtKB-UniRule"/>
</dbReference>
<dbReference type="GO" id="GO:0006730">
    <property type="term" value="P:one-carbon metabolic process"/>
    <property type="evidence" value="ECO:0007669"/>
    <property type="project" value="UniProtKB-KW"/>
</dbReference>
<dbReference type="GO" id="GO:0006556">
    <property type="term" value="P:S-adenosylmethionine biosynthetic process"/>
    <property type="evidence" value="ECO:0007669"/>
    <property type="project" value="UniProtKB-UniRule"/>
</dbReference>
<dbReference type="CDD" id="cd18079">
    <property type="entry name" value="S-AdoMet_synt"/>
    <property type="match status" value="1"/>
</dbReference>
<dbReference type="FunFam" id="3.30.300.10:FF:000003">
    <property type="entry name" value="S-adenosylmethionine synthase"/>
    <property type="match status" value="1"/>
</dbReference>
<dbReference type="FunFam" id="3.30.300.10:FF:000004">
    <property type="entry name" value="S-adenosylmethionine synthase"/>
    <property type="match status" value="1"/>
</dbReference>
<dbReference type="Gene3D" id="3.30.300.10">
    <property type="match status" value="3"/>
</dbReference>
<dbReference type="HAMAP" id="MF_00086">
    <property type="entry name" value="S_AdoMet_synth1"/>
    <property type="match status" value="1"/>
</dbReference>
<dbReference type="InterPro" id="IPR022631">
    <property type="entry name" value="ADOMET_SYNTHASE_CS"/>
</dbReference>
<dbReference type="InterPro" id="IPR022630">
    <property type="entry name" value="S-AdoMet_synt_C"/>
</dbReference>
<dbReference type="InterPro" id="IPR022629">
    <property type="entry name" value="S-AdoMet_synt_central"/>
</dbReference>
<dbReference type="InterPro" id="IPR022628">
    <property type="entry name" value="S-AdoMet_synt_N"/>
</dbReference>
<dbReference type="InterPro" id="IPR002133">
    <property type="entry name" value="S-AdoMet_synthetase"/>
</dbReference>
<dbReference type="InterPro" id="IPR022636">
    <property type="entry name" value="S-AdoMet_synthetase_sfam"/>
</dbReference>
<dbReference type="NCBIfam" id="TIGR01034">
    <property type="entry name" value="metK"/>
    <property type="match status" value="1"/>
</dbReference>
<dbReference type="PANTHER" id="PTHR11964">
    <property type="entry name" value="S-ADENOSYLMETHIONINE SYNTHETASE"/>
    <property type="match status" value="1"/>
</dbReference>
<dbReference type="Pfam" id="PF02773">
    <property type="entry name" value="S-AdoMet_synt_C"/>
    <property type="match status" value="1"/>
</dbReference>
<dbReference type="Pfam" id="PF02772">
    <property type="entry name" value="S-AdoMet_synt_M"/>
    <property type="match status" value="1"/>
</dbReference>
<dbReference type="Pfam" id="PF00438">
    <property type="entry name" value="S-AdoMet_synt_N"/>
    <property type="match status" value="1"/>
</dbReference>
<dbReference type="PIRSF" id="PIRSF000497">
    <property type="entry name" value="MAT"/>
    <property type="match status" value="1"/>
</dbReference>
<dbReference type="SUPFAM" id="SSF55973">
    <property type="entry name" value="S-adenosylmethionine synthetase"/>
    <property type="match status" value="3"/>
</dbReference>
<dbReference type="PROSITE" id="PS00376">
    <property type="entry name" value="ADOMET_SYNTHASE_1"/>
    <property type="match status" value="1"/>
</dbReference>
<dbReference type="PROSITE" id="PS00377">
    <property type="entry name" value="ADOMET_SYNTHASE_2"/>
    <property type="match status" value="1"/>
</dbReference>
<organism>
    <name type="scientific">Teredinibacter turnerae (strain ATCC 39867 / T7901)</name>
    <dbReference type="NCBI Taxonomy" id="377629"/>
    <lineage>
        <taxon>Bacteria</taxon>
        <taxon>Pseudomonadati</taxon>
        <taxon>Pseudomonadota</taxon>
        <taxon>Gammaproteobacteria</taxon>
        <taxon>Cellvibrionales</taxon>
        <taxon>Cellvibrionaceae</taxon>
        <taxon>Teredinibacter</taxon>
    </lineage>
</organism>
<accession>C5BTQ4</accession>